<comment type="function">
    <text evidence="6">Highly reducing polyketide synthase; part of the gene cluster that mediates the biosynthesis of the 6-methyl-2-pyrone derivative xylariolide D (PubMed:35628749). XilA produces the 5-alkyl-6-methyl-2-pyrone backbone called prexylariolide D via sequential condensations of 4 malonyl-CoA units with one acetyl-CoA starter unit (PubMed:35628749). During the biosynthesis, the linear polyketide chain is branched by the addition of an acetyl unit as the origin of the methyl group at the 2-pyrone ring (PubMed:35628749). Prexylariolide D is then hydroxylated at the side chain by xilC to form the final product, xylariolide D (PubMed:35628749).</text>
</comment>
<comment type="cofactor">
    <cofactor evidence="2">
        <name>pantetheine 4'-phosphate</name>
        <dbReference type="ChEBI" id="CHEBI:47942"/>
    </cofactor>
</comment>
<comment type="pathway">
    <text evidence="6">Secondary metabolite biosynthesis.</text>
</comment>
<comment type="domain">
    <text evidence="8">Multidomain protein; including a ketosynthase (KS) that catalyzes repeated decarboxylative condensation to elongate the polyketide backbone; a malonyl-CoA:ACP transacylase (MAT) that selects and transfers the extender unit malonyl-CoA; a dehydratase (DH) domain that reduces hydroxyl groups to enoyl groups; a methyltransferase (CMeT) domain responsible for the incorporation of methyl groups; an enoylreductase (ER) domain that reduces enoyl groups to alkyl group; a ketoreductase (KR) domain that catalyzes beta-ketoreduction steps; and an acyl-carrier protein (ACP) that serves as the tether of the growing and completed polyketide via its phosphopantetheinyl arm.</text>
</comment>
<protein>
    <recommendedName>
        <fullName evidence="7">Highly reducing polyketide synthase xilA</fullName>
        <shortName evidence="7">HR-PKS xilA</shortName>
        <ecNumber evidence="6">3.2.1.-</ecNumber>
    </recommendedName>
    <alternativeName>
        <fullName evidence="7">Xylariolide D biosynthesis cluster protein A</fullName>
    </alternativeName>
</protein>
<feature type="chain" id="PRO_0000459617" description="Highly reducing polyketide synthase xilA">
    <location>
        <begin position="1"/>
        <end position="2472"/>
    </location>
</feature>
<feature type="domain" description="Ketosynthase family 3 (KS3)" evidence="3">
    <location>
        <begin position="1"/>
        <end position="417"/>
    </location>
</feature>
<feature type="domain" description="Malonyl-CoA:ACP transacylase (MAT)" evidence="1">
    <location>
        <begin position="597"/>
        <end position="932"/>
    </location>
</feature>
<feature type="domain" description="PKS/mFAS DH" evidence="4">
    <location>
        <begin position="991"/>
        <end position="1294"/>
    </location>
</feature>
<feature type="domain" description="Enoyl reductase (ER)" evidence="1">
    <location>
        <begin position="1724"/>
        <end position="2036"/>
    </location>
</feature>
<feature type="domain" description="Ketoreductase (KR)" evidence="1">
    <location>
        <begin position="2060"/>
        <end position="2239"/>
    </location>
</feature>
<feature type="domain" description="Carrier" evidence="2">
    <location>
        <begin position="2391"/>
        <end position="2469"/>
    </location>
</feature>
<feature type="region of interest" description="Disordered" evidence="5">
    <location>
        <begin position="442"/>
        <end position="502"/>
    </location>
</feature>
<feature type="region of interest" description="N-terminal hotdog fold" evidence="4">
    <location>
        <begin position="991"/>
        <end position="1129"/>
    </location>
</feature>
<feature type="region of interest" description="C-terminal hotdog fold" evidence="4">
    <location>
        <begin position="1141"/>
        <end position="1294"/>
    </location>
</feature>
<feature type="region of interest" description="Methyltransferase (CMeT) domain" evidence="1 8">
    <location>
        <begin position="1289"/>
        <end position="1505"/>
    </location>
</feature>
<feature type="compositionally biased region" description="Low complexity" evidence="5">
    <location>
        <begin position="450"/>
        <end position="489"/>
    </location>
</feature>
<feature type="active site" description="For beta-ketoacyl synthase activity" evidence="3">
    <location>
        <position position="162"/>
    </location>
</feature>
<feature type="active site" description="For beta-ketoacyl synthase activity" evidence="3">
    <location>
        <position position="298"/>
    </location>
</feature>
<feature type="active site" description="For beta-ketoacyl synthase activity" evidence="3">
    <location>
        <position position="340"/>
    </location>
</feature>
<feature type="active site" description="Proton acceptor; for dehydratase activity" evidence="4">
    <location>
        <position position="1023"/>
    </location>
</feature>
<feature type="active site" description="Proton donor; for dehydratase activity" evidence="4">
    <location>
        <position position="1207"/>
    </location>
</feature>
<feature type="modified residue" description="O-(pantetheine 4'-phosphoryl)serine" evidence="2">
    <location>
        <position position="2428"/>
    </location>
</feature>
<accession>A0A9P5GG56</accession>
<proteinExistence type="evidence at protein level"/>
<dbReference type="EC" id="3.2.1.-" evidence="6"/>
<dbReference type="EMBL" id="JAAOZQ010000115">
    <property type="protein sequence ID" value="KAF7517450.1"/>
    <property type="molecule type" value="Genomic_DNA"/>
</dbReference>
<dbReference type="SMR" id="A0A9P5GG56"/>
<dbReference type="Proteomes" id="UP000701341">
    <property type="component" value="Unassembled WGS sequence"/>
</dbReference>
<dbReference type="GO" id="GO:0004315">
    <property type="term" value="F:3-oxoacyl-[acyl-carrier-protein] synthase activity"/>
    <property type="evidence" value="ECO:0007669"/>
    <property type="project" value="InterPro"/>
</dbReference>
<dbReference type="GO" id="GO:0004312">
    <property type="term" value="F:fatty acid synthase activity"/>
    <property type="evidence" value="ECO:0007669"/>
    <property type="project" value="TreeGrafter"/>
</dbReference>
<dbReference type="GO" id="GO:0016787">
    <property type="term" value="F:hydrolase activity"/>
    <property type="evidence" value="ECO:0007669"/>
    <property type="project" value="UniProtKB-KW"/>
</dbReference>
<dbReference type="GO" id="GO:0008168">
    <property type="term" value="F:methyltransferase activity"/>
    <property type="evidence" value="ECO:0007669"/>
    <property type="project" value="UniProtKB-KW"/>
</dbReference>
<dbReference type="GO" id="GO:0016491">
    <property type="term" value="F:oxidoreductase activity"/>
    <property type="evidence" value="ECO:0007669"/>
    <property type="project" value="UniProtKB-KW"/>
</dbReference>
<dbReference type="GO" id="GO:0031177">
    <property type="term" value="F:phosphopantetheine binding"/>
    <property type="evidence" value="ECO:0007669"/>
    <property type="project" value="InterPro"/>
</dbReference>
<dbReference type="GO" id="GO:0006633">
    <property type="term" value="P:fatty acid biosynthetic process"/>
    <property type="evidence" value="ECO:0007669"/>
    <property type="project" value="InterPro"/>
</dbReference>
<dbReference type="GO" id="GO:1901336">
    <property type="term" value="P:lactone biosynthetic process"/>
    <property type="evidence" value="ECO:0007669"/>
    <property type="project" value="UniProtKB-ARBA"/>
</dbReference>
<dbReference type="GO" id="GO:0032259">
    <property type="term" value="P:methylation"/>
    <property type="evidence" value="ECO:0007669"/>
    <property type="project" value="UniProtKB-KW"/>
</dbReference>
<dbReference type="GO" id="GO:0030639">
    <property type="term" value="P:polyketide biosynthetic process"/>
    <property type="evidence" value="ECO:0007669"/>
    <property type="project" value="UniProtKB-ARBA"/>
</dbReference>
<dbReference type="CDD" id="cd05195">
    <property type="entry name" value="enoyl_red"/>
    <property type="match status" value="1"/>
</dbReference>
<dbReference type="CDD" id="cd00833">
    <property type="entry name" value="PKS"/>
    <property type="match status" value="1"/>
</dbReference>
<dbReference type="Gene3D" id="3.30.70.3290">
    <property type="match status" value="1"/>
</dbReference>
<dbReference type="Gene3D" id="3.40.47.10">
    <property type="match status" value="1"/>
</dbReference>
<dbReference type="Gene3D" id="1.10.1200.10">
    <property type="entry name" value="ACP-like"/>
    <property type="match status" value="1"/>
</dbReference>
<dbReference type="Gene3D" id="3.40.366.10">
    <property type="entry name" value="Malonyl-Coenzyme A Acyl Carrier Protein, domain 2"/>
    <property type="match status" value="1"/>
</dbReference>
<dbReference type="Gene3D" id="3.90.180.10">
    <property type="entry name" value="Medium-chain alcohol dehydrogenases, catalytic domain"/>
    <property type="match status" value="1"/>
</dbReference>
<dbReference type="Gene3D" id="3.40.50.720">
    <property type="entry name" value="NAD(P)-binding Rossmann-like Domain"/>
    <property type="match status" value="3"/>
</dbReference>
<dbReference type="Gene3D" id="3.10.129.110">
    <property type="entry name" value="Polyketide synthase dehydratase"/>
    <property type="match status" value="1"/>
</dbReference>
<dbReference type="Gene3D" id="3.40.50.150">
    <property type="entry name" value="Vaccinia Virus protein VP39"/>
    <property type="match status" value="1"/>
</dbReference>
<dbReference type="InterPro" id="IPR001227">
    <property type="entry name" value="Ac_transferase_dom_sf"/>
</dbReference>
<dbReference type="InterPro" id="IPR036736">
    <property type="entry name" value="ACP-like_sf"/>
</dbReference>
<dbReference type="InterPro" id="IPR014043">
    <property type="entry name" value="Acyl_transferase_dom"/>
</dbReference>
<dbReference type="InterPro" id="IPR016035">
    <property type="entry name" value="Acyl_Trfase/lysoPLipase"/>
</dbReference>
<dbReference type="InterPro" id="IPR013149">
    <property type="entry name" value="ADH-like_C"/>
</dbReference>
<dbReference type="InterPro" id="IPR013154">
    <property type="entry name" value="ADH-like_N"/>
</dbReference>
<dbReference type="InterPro" id="IPR011032">
    <property type="entry name" value="GroES-like_sf"/>
</dbReference>
<dbReference type="InterPro" id="IPR018201">
    <property type="entry name" value="Ketoacyl_synth_AS"/>
</dbReference>
<dbReference type="InterPro" id="IPR014031">
    <property type="entry name" value="Ketoacyl_synth_C"/>
</dbReference>
<dbReference type="InterPro" id="IPR014030">
    <property type="entry name" value="Ketoacyl_synth_N"/>
</dbReference>
<dbReference type="InterPro" id="IPR016036">
    <property type="entry name" value="Malonyl_transacylase_ACP-bd"/>
</dbReference>
<dbReference type="InterPro" id="IPR036291">
    <property type="entry name" value="NAD(P)-bd_dom_sf"/>
</dbReference>
<dbReference type="InterPro" id="IPR032821">
    <property type="entry name" value="PKS_assoc"/>
</dbReference>
<dbReference type="InterPro" id="IPR020841">
    <property type="entry name" value="PKS_Beta-ketoAc_synthase_dom"/>
</dbReference>
<dbReference type="InterPro" id="IPR042104">
    <property type="entry name" value="PKS_dehydratase_sf"/>
</dbReference>
<dbReference type="InterPro" id="IPR020807">
    <property type="entry name" value="PKS_DH"/>
</dbReference>
<dbReference type="InterPro" id="IPR049551">
    <property type="entry name" value="PKS_DH_C"/>
</dbReference>
<dbReference type="InterPro" id="IPR049552">
    <property type="entry name" value="PKS_DH_N"/>
</dbReference>
<dbReference type="InterPro" id="IPR020843">
    <property type="entry name" value="PKS_ER"/>
</dbReference>
<dbReference type="InterPro" id="IPR013968">
    <property type="entry name" value="PKS_KR"/>
</dbReference>
<dbReference type="InterPro" id="IPR049900">
    <property type="entry name" value="PKS_mFAS_DH"/>
</dbReference>
<dbReference type="InterPro" id="IPR050091">
    <property type="entry name" value="PKS_NRPS_Biosynth_Enz"/>
</dbReference>
<dbReference type="InterPro" id="IPR020806">
    <property type="entry name" value="PKS_PP-bd"/>
</dbReference>
<dbReference type="InterPro" id="IPR009081">
    <property type="entry name" value="PP-bd_ACP"/>
</dbReference>
<dbReference type="InterPro" id="IPR029063">
    <property type="entry name" value="SAM-dependent_MTases_sf"/>
</dbReference>
<dbReference type="InterPro" id="IPR016039">
    <property type="entry name" value="Thiolase-like"/>
</dbReference>
<dbReference type="PANTHER" id="PTHR43775">
    <property type="entry name" value="FATTY ACID SYNTHASE"/>
    <property type="match status" value="1"/>
</dbReference>
<dbReference type="PANTHER" id="PTHR43775:SF50">
    <property type="entry name" value="HIGHLY REDUCING POLYKETIDE SYNTHASE SRDA"/>
    <property type="match status" value="1"/>
</dbReference>
<dbReference type="Pfam" id="PF00698">
    <property type="entry name" value="Acyl_transf_1"/>
    <property type="match status" value="1"/>
</dbReference>
<dbReference type="Pfam" id="PF08240">
    <property type="entry name" value="ADH_N"/>
    <property type="match status" value="1"/>
</dbReference>
<dbReference type="Pfam" id="PF00107">
    <property type="entry name" value="ADH_zinc_N"/>
    <property type="match status" value="1"/>
</dbReference>
<dbReference type="Pfam" id="PF22621">
    <property type="entry name" value="CurL-like_PKS_C"/>
    <property type="match status" value="1"/>
</dbReference>
<dbReference type="Pfam" id="PF16197">
    <property type="entry name" value="KAsynt_C_assoc"/>
    <property type="match status" value="1"/>
</dbReference>
<dbReference type="Pfam" id="PF00109">
    <property type="entry name" value="ketoacyl-synt"/>
    <property type="match status" value="1"/>
</dbReference>
<dbReference type="Pfam" id="PF02801">
    <property type="entry name" value="Ketoacyl-synt_C"/>
    <property type="match status" value="1"/>
</dbReference>
<dbReference type="Pfam" id="PF08659">
    <property type="entry name" value="KR"/>
    <property type="match status" value="1"/>
</dbReference>
<dbReference type="Pfam" id="PF21089">
    <property type="entry name" value="PKS_DH_N"/>
    <property type="match status" value="1"/>
</dbReference>
<dbReference type="Pfam" id="PF00550">
    <property type="entry name" value="PP-binding"/>
    <property type="match status" value="1"/>
</dbReference>
<dbReference type="Pfam" id="PF14765">
    <property type="entry name" value="PS-DH"/>
    <property type="match status" value="1"/>
</dbReference>
<dbReference type="SMART" id="SM00827">
    <property type="entry name" value="PKS_AT"/>
    <property type="match status" value="1"/>
</dbReference>
<dbReference type="SMART" id="SM00826">
    <property type="entry name" value="PKS_DH"/>
    <property type="match status" value="1"/>
</dbReference>
<dbReference type="SMART" id="SM00829">
    <property type="entry name" value="PKS_ER"/>
    <property type="match status" value="1"/>
</dbReference>
<dbReference type="SMART" id="SM00822">
    <property type="entry name" value="PKS_KR"/>
    <property type="match status" value="1"/>
</dbReference>
<dbReference type="SMART" id="SM00825">
    <property type="entry name" value="PKS_KS"/>
    <property type="match status" value="1"/>
</dbReference>
<dbReference type="SMART" id="SM00823">
    <property type="entry name" value="PKS_PP"/>
    <property type="match status" value="1"/>
</dbReference>
<dbReference type="SUPFAM" id="SSF47336">
    <property type="entry name" value="ACP-like"/>
    <property type="match status" value="1"/>
</dbReference>
<dbReference type="SUPFAM" id="SSF52151">
    <property type="entry name" value="FabD/lysophospholipase-like"/>
    <property type="match status" value="1"/>
</dbReference>
<dbReference type="SUPFAM" id="SSF50129">
    <property type="entry name" value="GroES-like"/>
    <property type="match status" value="1"/>
</dbReference>
<dbReference type="SUPFAM" id="SSF51735">
    <property type="entry name" value="NAD(P)-binding Rossmann-fold domains"/>
    <property type="match status" value="2"/>
</dbReference>
<dbReference type="SUPFAM" id="SSF55048">
    <property type="entry name" value="Probable ACP-binding domain of malonyl-CoA ACP transacylase"/>
    <property type="match status" value="1"/>
</dbReference>
<dbReference type="SUPFAM" id="SSF53335">
    <property type="entry name" value="S-adenosyl-L-methionine-dependent methyltransferases"/>
    <property type="match status" value="1"/>
</dbReference>
<dbReference type="SUPFAM" id="SSF53901">
    <property type="entry name" value="Thiolase-like"/>
    <property type="match status" value="1"/>
</dbReference>
<dbReference type="PROSITE" id="PS50075">
    <property type="entry name" value="CARRIER"/>
    <property type="match status" value="1"/>
</dbReference>
<dbReference type="PROSITE" id="PS00606">
    <property type="entry name" value="KS3_1"/>
    <property type="match status" value="1"/>
</dbReference>
<dbReference type="PROSITE" id="PS52004">
    <property type="entry name" value="KS3_2"/>
    <property type="match status" value="1"/>
</dbReference>
<dbReference type="PROSITE" id="PS52019">
    <property type="entry name" value="PKS_MFAS_DH"/>
    <property type="match status" value="1"/>
</dbReference>
<gene>
    <name evidence="7" type="primary">xilA</name>
    <name type="ORF">PCG10_001212</name>
</gene>
<sequence length="2472" mass="269461">MPGGVRDLPALWEFLKEQKDVHREFDEPRFSAKGFSHPNPDRPGTAVARSGFLLDEDPRLFDAAFFGITDNEVETMDASQRKLLEVTYEAFENAGETWEGVSGSRVGVFVGDISFDNYLSQTRDWDYSGKYSATGSFPNMLANRIHYVFNLKGPSLLVNSACTSAMYALHLAMNSIRNGDCESAIVAGSNWIMDPNCHIAMGKLGALSATSRSHTFDASADGYARGEGFAALYLKKTSLAIEDGSPIRALIMGSAINANGRTNGITNPSGPAQEIVIREAYKNAGDLDPSQTTLLECHGTGTRVGDPTEIKAAGNVFGPSRSSERNDHLVVGSVKTNLGHLEGACALPGILKVVAALEQGEIPPTLGFQTPNPRIDFEEAKARVSTQVEPWPKDKLKRASITSAGFGGTNGHCIIDDVHNLLPSYIKPGIVGQHVERLNGQNDINGKSGTNGANGANRVNGVNGVNGVNGVNGANGHSNASLLSNGSNNPLDQRKHHHPKTDALKLVRKADAGTRKLVVLPFSAHNQTSLVANIDSLGQVIHQHSLADVAYTLSARRSRFMHRSYCIVDKDQVPEMGLKQEKELEIVSSPQHVSVGFIFTGQGAQWHAMGAGLFQYSVFQNVILYLDSILAMLPEPAPWKIADFIAGNCGTDDIQTPAVSQAVCTAVQIGLVDLLASWSVRPAGVAGHSSGEIAAAYASGRITAAEAIVAAYYRGYMVSFNNKRGAMLAVGFGPEKAMEYIREADVEDRVTVAAINSFDSVTLSGDADCVEDLSARLSKESIFNRLLRTGGLAYHSHHMLPFGSAYEEHVNDGLSHIRSLGVDTTSSKYPFIPWASSVTPDKSTTEVTASYWRANLESPVRFTDAVSNLLSLPDLNIGALVEIGPHPALKGPLGQITKSLGKVIPHIASLKRNQDAQRSLLECTGTLFVHNVSVSLVAVNAIDGQGPKGEHYLEYGCTAIDLPRYKYTYGPIKYHESRLSKEYRLRPTLRHDLLGSKVPGTTKLRPQWRNMLRLKDLGWLNDHRVPPHVLHPGAAHIVMAMVAAEHKYNEFPDALPIIGLIMRNVSIKKTLVVPEDDHGIEIVLSMELEDGATAKSPGWASFSIASIVRDSDQWTEHCSGQIKVEVAKFEQAMPIDTTMDGRLVDAQTWYKRFADMGLQFGPSFQGYSDIRADPAKNIASAKLALNTTAGMFPGGESTYPIHPASLDLVIRLGLMACNGGQAETASVQLPIHFNQMKFNYGHLEGRDWATGVSRGELRGLRGAYAQLQMLDEEGKVMLDIDNMRFTSLNNEQESPSTGDRVGKAYVSPFARLVWRPDIRTLSKDQFNEALTSYQDNFGEFPQLCRIFDLAGHANPDLRVLELGVSSNAGATQAILKVLMGSNSIKRYREYVATDITEERLESVRESTTEFRDVKYSVLDINKDPSEQGFQSGLYDIIVCSNGLQTPQAMQHLKRLVTPTGRLIQVNGTGSEIVPESLQNVDFELVGEVTEPVNHSIITVHALRSIEQHQIDSNRLVHFLHGDQGPPELLNQLAQVLGELGLAIKISLIDDAQTVVSPNSHVVAFLDGNNLLFAANQHRIGLFQHLAANTNSMMWLTSCGLVKGRNPDGSFVSGLLRTLAAENPAGQFLSVDIDAEDFRVRDTEMDRLVRSLVEVVLPLQQNPEHNREIVVNHDLAWQDGNMWVSRLVPDTELQGYDETAADDQNIKAIPLSTLGPVRAAFKIPGLLTSLYFKPYTELWNALPQDWIEIKLEAVGLNWKDLGLCSGRFDQNNLSNEYVGVISDIGSSVHGFSIGDRVYGMGKGHFGNYTRVPAVLAQKLEASVASLDAATMPLVYMTAVYAFEHITRVKGGSKVLIQSGSGGLGLAAIQLALSKGADVYVTVGTADKAQFLTDVMGISSDHIFSSRKLTDVPRMIRATKNGGFDVILSTSQGDMLHESIEALAPLGHLIDVGRMDVTGAKTVALELFQKSASFTSFDLGLVIERDPELGGDLMSTVNQHFRAGRIGPIRPYHVSDISQLDQALLKLSKGTHIGKMVISYQNPSSLLNVHQSVTHARFLSEASYILVGGLSPLGRCIIRWMVSRGAQHLSVWSRRGADNLSPEAAALINEMASQGVHIQIVTCDVSNREQVLRSMQDANSERAVRGVFNYAVSYQDISFDKMTADMFYQGMAAKVFGTKNLHEATANLPLDFFTMTSSLGTVYAFPTQSTYLAANNFLDYFARYRRQSGLPATTVSLGFIKDLGALTQDEVTVNLFARTKGQTVTGNQVLRALEPAFVKDLNTKDQWLGRSEDPLSAANIFTGIDPAVLANMKRAEPKGSASSTVPRWYHDPRVSLMLRAMDDAWRFGNEGGSDKATFGFDDADASPAVQLRRHFEASMKRIRNGQDEKEVAETVKLVSDAIRTTVAGMLFIDPSVVKESHTVVDHGIDSLLAAEFRTWLNSSFGKNISMLQLMDARSNIGSIARVIVEEAIGA</sequence>
<name>XILA_PENCR</name>
<organism>
    <name type="scientific">Penicillium crustosum</name>
    <name type="common">Blue mold fungus</name>
    <dbReference type="NCBI Taxonomy" id="36656"/>
    <lineage>
        <taxon>Eukaryota</taxon>
        <taxon>Fungi</taxon>
        <taxon>Dikarya</taxon>
        <taxon>Ascomycota</taxon>
        <taxon>Pezizomycotina</taxon>
        <taxon>Eurotiomycetes</taxon>
        <taxon>Eurotiomycetidae</taxon>
        <taxon>Eurotiales</taxon>
        <taxon>Aspergillaceae</taxon>
        <taxon>Penicillium</taxon>
    </lineage>
</organism>
<reference key="1">
    <citation type="submission" date="2020-02" db="EMBL/GenBank/DDBJ databases">
        <authorList>
            <person name="Lichtner F.J."/>
        </authorList>
    </citation>
    <scope>NUCLEOTIDE SEQUENCE [LARGE SCALE GENOMIC DNA]</scope>
    <source>
        <strain>G10</strain>
    </source>
</reference>
<reference key="2">
    <citation type="journal article" date="2022" name="J. Fungi">
        <title>Biosynthesis of xylariolide D in Penicillium crustosum implies a chain branching reaction catalyzed by a highly reducing polyketide synthase.</title>
        <authorList>
            <person name="Stierle S.A."/>
            <person name="Li S.M."/>
        </authorList>
    </citation>
    <scope>FUNCTION</scope>
    <scope>CATALYTIC ACTIVITY</scope>
    <scope>PATHWAY</scope>
</reference>
<keyword id="KW-0012">Acyltransferase</keyword>
<keyword id="KW-0378">Hydrolase</keyword>
<keyword id="KW-0489">Methyltransferase</keyword>
<keyword id="KW-0511">Multifunctional enzyme</keyword>
<keyword id="KW-0521">NADP</keyword>
<keyword id="KW-0560">Oxidoreductase</keyword>
<keyword id="KW-0596">Phosphopantetheine</keyword>
<keyword id="KW-0597">Phosphoprotein</keyword>
<keyword id="KW-1185">Reference proteome</keyword>
<keyword id="KW-0949">S-adenosyl-L-methionine</keyword>
<keyword id="KW-0808">Transferase</keyword>
<evidence type="ECO:0000255" key="1"/>
<evidence type="ECO:0000255" key="2">
    <source>
        <dbReference type="PROSITE-ProRule" id="PRU00258"/>
    </source>
</evidence>
<evidence type="ECO:0000255" key="3">
    <source>
        <dbReference type="PROSITE-ProRule" id="PRU01348"/>
    </source>
</evidence>
<evidence type="ECO:0000255" key="4">
    <source>
        <dbReference type="PROSITE-ProRule" id="PRU01363"/>
    </source>
</evidence>
<evidence type="ECO:0000256" key="5">
    <source>
        <dbReference type="SAM" id="MobiDB-lite"/>
    </source>
</evidence>
<evidence type="ECO:0000269" key="6">
    <source>
    </source>
</evidence>
<evidence type="ECO:0000303" key="7">
    <source>
    </source>
</evidence>
<evidence type="ECO:0000305" key="8">
    <source>
    </source>
</evidence>